<accession>Q9Z8L9</accession>
<organism>
    <name type="scientific">Chlamydia pneumoniae</name>
    <name type="common">Chlamydophila pneumoniae</name>
    <dbReference type="NCBI Taxonomy" id="83558"/>
    <lineage>
        <taxon>Bacteria</taxon>
        <taxon>Pseudomonadati</taxon>
        <taxon>Chlamydiota</taxon>
        <taxon>Chlamydiia</taxon>
        <taxon>Chlamydiales</taxon>
        <taxon>Chlamydiaceae</taxon>
        <taxon>Chlamydia/Chlamydophila group</taxon>
        <taxon>Chlamydia</taxon>
    </lineage>
</organism>
<proteinExistence type="inferred from homology"/>
<feature type="chain" id="PRO_0000121816" description="tRNA pseudouridine synthase B">
    <location>
        <begin position="1"/>
        <end position="235"/>
    </location>
</feature>
<feature type="active site" description="Nucleophile" evidence="1">
    <location>
        <position position="45"/>
    </location>
</feature>
<gene>
    <name evidence="1" type="primary">truB</name>
    <name type="ordered locus">CPn_0319</name>
    <name type="ordered locus">CP_0438</name>
    <name type="ordered locus">CpB0329</name>
</gene>
<reference key="1">
    <citation type="journal article" date="1999" name="Nat. Genet.">
        <title>Comparative genomes of Chlamydia pneumoniae and C. trachomatis.</title>
        <authorList>
            <person name="Kalman S."/>
            <person name="Mitchell W.P."/>
            <person name="Marathe R."/>
            <person name="Lammel C.J."/>
            <person name="Fan J."/>
            <person name="Hyman R.W."/>
            <person name="Olinger L."/>
            <person name="Grimwood J."/>
            <person name="Davis R.W."/>
            <person name="Stephens R.S."/>
        </authorList>
    </citation>
    <scope>NUCLEOTIDE SEQUENCE [LARGE SCALE GENOMIC DNA]</scope>
    <source>
        <strain>CWL029</strain>
    </source>
</reference>
<reference key="2">
    <citation type="journal article" date="2000" name="Nucleic Acids Res.">
        <title>Genome sequences of Chlamydia trachomatis MoPn and Chlamydia pneumoniae AR39.</title>
        <authorList>
            <person name="Read T.D."/>
            <person name="Brunham R.C."/>
            <person name="Shen C."/>
            <person name="Gill S.R."/>
            <person name="Heidelberg J.F."/>
            <person name="White O."/>
            <person name="Hickey E.K."/>
            <person name="Peterson J.D."/>
            <person name="Utterback T.R."/>
            <person name="Berry K.J."/>
            <person name="Bass S."/>
            <person name="Linher K.D."/>
            <person name="Weidman J.F."/>
            <person name="Khouri H.M."/>
            <person name="Craven B."/>
            <person name="Bowman C."/>
            <person name="Dodson R.J."/>
            <person name="Gwinn M.L."/>
            <person name="Nelson W.C."/>
            <person name="DeBoy R.T."/>
            <person name="Kolonay J.F."/>
            <person name="McClarty G."/>
            <person name="Salzberg S.L."/>
            <person name="Eisen J.A."/>
            <person name="Fraser C.M."/>
        </authorList>
    </citation>
    <scope>NUCLEOTIDE SEQUENCE [LARGE SCALE GENOMIC DNA]</scope>
    <source>
        <strain>AR39</strain>
    </source>
</reference>
<reference key="3">
    <citation type="journal article" date="2000" name="Nucleic Acids Res.">
        <title>Comparison of whole genome sequences of Chlamydia pneumoniae J138 from Japan and CWL029 from USA.</title>
        <authorList>
            <person name="Shirai M."/>
            <person name="Hirakawa H."/>
            <person name="Kimoto M."/>
            <person name="Tabuchi M."/>
            <person name="Kishi F."/>
            <person name="Ouchi K."/>
            <person name="Shiba T."/>
            <person name="Ishii K."/>
            <person name="Hattori M."/>
            <person name="Kuhara S."/>
            <person name="Nakazawa T."/>
        </authorList>
    </citation>
    <scope>NUCLEOTIDE SEQUENCE [LARGE SCALE GENOMIC DNA]</scope>
    <source>
        <strain>J138</strain>
    </source>
</reference>
<reference key="4">
    <citation type="submission" date="2002-05" db="EMBL/GenBank/DDBJ databases">
        <title>The genome sequence of Chlamydia pneumoniae TW183 and comparison with other Chlamydia strains based on whole genome sequence analysis.</title>
        <authorList>
            <person name="Geng M.M."/>
            <person name="Schuhmacher A."/>
            <person name="Muehldorfer I."/>
            <person name="Bensch K.W."/>
            <person name="Schaefer K.P."/>
            <person name="Schneider S."/>
            <person name="Pohl T."/>
            <person name="Essig A."/>
            <person name="Marre R."/>
            <person name="Melchers K."/>
        </authorList>
    </citation>
    <scope>NUCLEOTIDE SEQUENCE [LARGE SCALE GENOMIC DNA]</scope>
    <source>
        <strain>TW-183</strain>
    </source>
</reference>
<sequence>MDLAVELKEGILLVDKPQGRTSFSLIRALTKLIGVKKIGHAGTLDPFATGVMVMLIGRKFTRLSDILLFEDKEYEAIAHLGTTTDSYDCDGKVVGRSKKIPSLEEVLSAAEYFQGEIQQLPPMFSAKKVQGKKLYEYARKGLSIERHHSTVQVHLQITKYEYPLLHFVVSCSKGTYIRSIAHELGTMLGCGAYLEQLRRLRSGRFSIDECIDGNLLDHPDFDISPYLRDAHGNSL</sequence>
<dbReference type="EC" id="5.4.99.25" evidence="1"/>
<dbReference type="EMBL" id="AE001363">
    <property type="protein sequence ID" value="AAD18468.1"/>
    <property type="molecule type" value="Genomic_DNA"/>
</dbReference>
<dbReference type="EMBL" id="AE002161">
    <property type="protein sequence ID" value="AAF38278.1"/>
    <property type="molecule type" value="Genomic_DNA"/>
</dbReference>
<dbReference type="EMBL" id="BA000008">
    <property type="protein sequence ID" value="BAA98529.1"/>
    <property type="molecule type" value="Genomic_DNA"/>
</dbReference>
<dbReference type="EMBL" id="AE009440">
    <property type="protein sequence ID" value="AAP98262.1"/>
    <property type="molecule type" value="Genomic_DNA"/>
</dbReference>
<dbReference type="PIR" id="G86530">
    <property type="entry name" value="G86530"/>
</dbReference>
<dbReference type="PIR" id="H72093">
    <property type="entry name" value="H72093"/>
</dbReference>
<dbReference type="RefSeq" id="NP_224524.1">
    <property type="nucleotide sequence ID" value="NC_000922.1"/>
</dbReference>
<dbReference type="RefSeq" id="WP_010882967.1">
    <property type="nucleotide sequence ID" value="NZ_LN847257.1"/>
</dbReference>
<dbReference type="SMR" id="Q9Z8L9"/>
<dbReference type="STRING" id="406984.CPK_ORF00827"/>
<dbReference type="GeneID" id="45050368"/>
<dbReference type="KEGG" id="cpa:CP_0438"/>
<dbReference type="KEGG" id="cpj:truB"/>
<dbReference type="KEGG" id="cpn:CPn_0319"/>
<dbReference type="KEGG" id="cpt:CpB0329"/>
<dbReference type="PATRIC" id="fig|115713.3.peg.353"/>
<dbReference type="eggNOG" id="COG0130">
    <property type="taxonomic scope" value="Bacteria"/>
</dbReference>
<dbReference type="HOGENOM" id="CLU_032087_2_0_0"/>
<dbReference type="OMA" id="CSHGTYI"/>
<dbReference type="OrthoDB" id="9802309at2"/>
<dbReference type="Proteomes" id="UP000000583">
    <property type="component" value="Chromosome"/>
</dbReference>
<dbReference type="Proteomes" id="UP000000801">
    <property type="component" value="Chromosome"/>
</dbReference>
<dbReference type="GO" id="GO:0003723">
    <property type="term" value="F:RNA binding"/>
    <property type="evidence" value="ECO:0007669"/>
    <property type="project" value="InterPro"/>
</dbReference>
<dbReference type="GO" id="GO:0160148">
    <property type="term" value="F:tRNA pseudouridine(55) synthase activity"/>
    <property type="evidence" value="ECO:0007669"/>
    <property type="project" value="UniProtKB-EC"/>
</dbReference>
<dbReference type="GO" id="GO:1990481">
    <property type="term" value="P:mRNA pseudouridine synthesis"/>
    <property type="evidence" value="ECO:0007669"/>
    <property type="project" value="TreeGrafter"/>
</dbReference>
<dbReference type="GO" id="GO:0031119">
    <property type="term" value="P:tRNA pseudouridine synthesis"/>
    <property type="evidence" value="ECO:0007669"/>
    <property type="project" value="UniProtKB-UniRule"/>
</dbReference>
<dbReference type="CDD" id="cd02573">
    <property type="entry name" value="PseudoU_synth_EcTruB"/>
    <property type="match status" value="1"/>
</dbReference>
<dbReference type="Gene3D" id="3.30.2350.10">
    <property type="entry name" value="Pseudouridine synthase"/>
    <property type="match status" value="1"/>
</dbReference>
<dbReference type="HAMAP" id="MF_01080">
    <property type="entry name" value="TruB_bact"/>
    <property type="match status" value="1"/>
</dbReference>
<dbReference type="InterPro" id="IPR020103">
    <property type="entry name" value="PsdUridine_synth_cat_dom_sf"/>
</dbReference>
<dbReference type="InterPro" id="IPR002501">
    <property type="entry name" value="PsdUridine_synth_N"/>
</dbReference>
<dbReference type="InterPro" id="IPR014780">
    <property type="entry name" value="tRNA_psdUridine_synth_TruB"/>
</dbReference>
<dbReference type="InterPro" id="IPR032819">
    <property type="entry name" value="TruB_C"/>
</dbReference>
<dbReference type="NCBIfam" id="TIGR00431">
    <property type="entry name" value="TruB"/>
    <property type="match status" value="1"/>
</dbReference>
<dbReference type="PANTHER" id="PTHR13767:SF2">
    <property type="entry name" value="PSEUDOURIDYLATE SYNTHASE TRUB1"/>
    <property type="match status" value="1"/>
</dbReference>
<dbReference type="PANTHER" id="PTHR13767">
    <property type="entry name" value="TRNA-PSEUDOURIDINE SYNTHASE"/>
    <property type="match status" value="1"/>
</dbReference>
<dbReference type="Pfam" id="PF16198">
    <property type="entry name" value="TruB_C_2"/>
    <property type="match status" value="1"/>
</dbReference>
<dbReference type="Pfam" id="PF01509">
    <property type="entry name" value="TruB_N"/>
    <property type="match status" value="1"/>
</dbReference>
<dbReference type="SUPFAM" id="SSF55120">
    <property type="entry name" value="Pseudouridine synthase"/>
    <property type="match status" value="1"/>
</dbReference>
<evidence type="ECO:0000255" key="1">
    <source>
        <dbReference type="HAMAP-Rule" id="MF_01080"/>
    </source>
</evidence>
<comment type="function">
    <text evidence="1">Responsible for synthesis of pseudouridine from uracil-55 in the psi GC loop of transfer RNAs.</text>
</comment>
<comment type="catalytic activity">
    <reaction evidence="1">
        <text>uridine(55) in tRNA = pseudouridine(55) in tRNA</text>
        <dbReference type="Rhea" id="RHEA:42532"/>
        <dbReference type="Rhea" id="RHEA-COMP:10101"/>
        <dbReference type="Rhea" id="RHEA-COMP:10102"/>
        <dbReference type="ChEBI" id="CHEBI:65314"/>
        <dbReference type="ChEBI" id="CHEBI:65315"/>
        <dbReference type="EC" id="5.4.99.25"/>
    </reaction>
</comment>
<comment type="similarity">
    <text evidence="1">Belongs to the pseudouridine synthase TruB family. Type 1 subfamily.</text>
</comment>
<protein>
    <recommendedName>
        <fullName evidence="1">tRNA pseudouridine synthase B</fullName>
        <ecNumber evidence="1">5.4.99.25</ecNumber>
    </recommendedName>
    <alternativeName>
        <fullName evidence="1">tRNA pseudouridine(55) synthase</fullName>
        <shortName evidence="1">Psi55 synthase</shortName>
    </alternativeName>
    <alternativeName>
        <fullName evidence="1">tRNA pseudouridylate synthase</fullName>
    </alternativeName>
    <alternativeName>
        <fullName evidence="1">tRNA-uridine isomerase</fullName>
    </alternativeName>
</protein>
<keyword id="KW-0413">Isomerase</keyword>
<keyword id="KW-0819">tRNA processing</keyword>
<name>TRUB_CHLPN</name>